<name>RNH2_ORITI</name>
<organism>
    <name type="scientific">Orientia tsutsugamushi (strain Ikeda)</name>
    <name type="common">Rickettsia tsutsugamushi</name>
    <dbReference type="NCBI Taxonomy" id="334380"/>
    <lineage>
        <taxon>Bacteria</taxon>
        <taxon>Pseudomonadati</taxon>
        <taxon>Pseudomonadota</taxon>
        <taxon>Alphaproteobacteria</taxon>
        <taxon>Rickettsiales</taxon>
        <taxon>Rickettsiaceae</taxon>
        <taxon>Rickettsieae</taxon>
        <taxon>Orientia</taxon>
    </lineage>
</organism>
<proteinExistence type="inferred from homology"/>
<gene>
    <name evidence="1" type="primary">rnhB</name>
    <name type="ordered locus">OTT_1624</name>
</gene>
<protein>
    <recommendedName>
        <fullName evidence="1">Ribonuclease HII</fullName>
        <shortName evidence="1">RNase HII</shortName>
        <ecNumber evidence="1">3.1.26.4</ecNumber>
    </recommendedName>
</protein>
<dbReference type="EC" id="3.1.26.4" evidence="1"/>
<dbReference type="EMBL" id="AP008981">
    <property type="protein sequence ID" value="BAG41082.1"/>
    <property type="molecule type" value="Genomic_DNA"/>
</dbReference>
<dbReference type="RefSeq" id="WP_012462078.1">
    <property type="nucleotide sequence ID" value="NC_010793.1"/>
</dbReference>
<dbReference type="SMR" id="B3CUN5"/>
<dbReference type="KEGG" id="ott:OTT_1624"/>
<dbReference type="HOGENOM" id="CLU_036532_3_1_5"/>
<dbReference type="OrthoDB" id="9803420at2"/>
<dbReference type="Proteomes" id="UP000001033">
    <property type="component" value="Chromosome"/>
</dbReference>
<dbReference type="GO" id="GO:0005737">
    <property type="term" value="C:cytoplasm"/>
    <property type="evidence" value="ECO:0007669"/>
    <property type="project" value="UniProtKB-SubCell"/>
</dbReference>
<dbReference type="GO" id="GO:0032299">
    <property type="term" value="C:ribonuclease H2 complex"/>
    <property type="evidence" value="ECO:0007669"/>
    <property type="project" value="TreeGrafter"/>
</dbReference>
<dbReference type="GO" id="GO:0030145">
    <property type="term" value="F:manganese ion binding"/>
    <property type="evidence" value="ECO:0007669"/>
    <property type="project" value="UniProtKB-UniRule"/>
</dbReference>
<dbReference type="GO" id="GO:0003723">
    <property type="term" value="F:RNA binding"/>
    <property type="evidence" value="ECO:0007669"/>
    <property type="project" value="InterPro"/>
</dbReference>
<dbReference type="GO" id="GO:0004523">
    <property type="term" value="F:RNA-DNA hybrid ribonuclease activity"/>
    <property type="evidence" value="ECO:0007669"/>
    <property type="project" value="UniProtKB-UniRule"/>
</dbReference>
<dbReference type="GO" id="GO:0043137">
    <property type="term" value="P:DNA replication, removal of RNA primer"/>
    <property type="evidence" value="ECO:0007669"/>
    <property type="project" value="TreeGrafter"/>
</dbReference>
<dbReference type="GO" id="GO:0006298">
    <property type="term" value="P:mismatch repair"/>
    <property type="evidence" value="ECO:0007669"/>
    <property type="project" value="TreeGrafter"/>
</dbReference>
<dbReference type="CDD" id="cd07182">
    <property type="entry name" value="RNase_HII_bacteria_HII_like"/>
    <property type="match status" value="1"/>
</dbReference>
<dbReference type="Gene3D" id="3.30.420.10">
    <property type="entry name" value="Ribonuclease H-like superfamily/Ribonuclease H"/>
    <property type="match status" value="1"/>
</dbReference>
<dbReference type="HAMAP" id="MF_00052_B">
    <property type="entry name" value="RNase_HII_B"/>
    <property type="match status" value="1"/>
</dbReference>
<dbReference type="InterPro" id="IPR022898">
    <property type="entry name" value="RNase_HII"/>
</dbReference>
<dbReference type="InterPro" id="IPR001352">
    <property type="entry name" value="RNase_HII/HIII"/>
</dbReference>
<dbReference type="InterPro" id="IPR024567">
    <property type="entry name" value="RNase_HII/HIII_dom"/>
</dbReference>
<dbReference type="InterPro" id="IPR012337">
    <property type="entry name" value="RNaseH-like_sf"/>
</dbReference>
<dbReference type="InterPro" id="IPR036397">
    <property type="entry name" value="RNaseH_sf"/>
</dbReference>
<dbReference type="NCBIfam" id="NF000595">
    <property type="entry name" value="PRK00015.1-3"/>
    <property type="match status" value="1"/>
</dbReference>
<dbReference type="PANTHER" id="PTHR10954">
    <property type="entry name" value="RIBONUCLEASE H2 SUBUNIT A"/>
    <property type="match status" value="1"/>
</dbReference>
<dbReference type="PANTHER" id="PTHR10954:SF18">
    <property type="entry name" value="RIBONUCLEASE HII"/>
    <property type="match status" value="1"/>
</dbReference>
<dbReference type="Pfam" id="PF01351">
    <property type="entry name" value="RNase_HII"/>
    <property type="match status" value="1"/>
</dbReference>
<dbReference type="SUPFAM" id="SSF53098">
    <property type="entry name" value="Ribonuclease H-like"/>
    <property type="match status" value="1"/>
</dbReference>
<dbReference type="PROSITE" id="PS51975">
    <property type="entry name" value="RNASE_H_2"/>
    <property type="match status" value="1"/>
</dbReference>
<feature type="chain" id="PRO_1000091638" description="Ribonuclease HII">
    <location>
        <begin position="1"/>
        <end position="205"/>
    </location>
</feature>
<feature type="domain" description="RNase H type-2" evidence="2">
    <location>
        <begin position="14"/>
        <end position="201"/>
    </location>
</feature>
<feature type="binding site" evidence="1">
    <location>
        <position position="20"/>
    </location>
    <ligand>
        <name>a divalent metal cation</name>
        <dbReference type="ChEBI" id="CHEBI:60240"/>
    </ligand>
</feature>
<feature type="binding site" evidence="1">
    <location>
        <position position="21"/>
    </location>
    <ligand>
        <name>a divalent metal cation</name>
        <dbReference type="ChEBI" id="CHEBI:60240"/>
    </ligand>
</feature>
<feature type="binding site" evidence="1">
    <location>
        <position position="111"/>
    </location>
    <ligand>
        <name>a divalent metal cation</name>
        <dbReference type="ChEBI" id="CHEBI:60240"/>
    </ligand>
</feature>
<accession>B3CUN5</accession>
<reference key="1">
    <citation type="journal article" date="2008" name="DNA Res.">
        <title>The whole-genome sequencing of the obligate intracellular bacterium Orientia tsutsugamushi revealed massive gene amplification during reductive genome evolution.</title>
        <authorList>
            <person name="Nakayama K."/>
            <person name="Yamashita A."/>
            <person name="Kurokawa K."/>
            <person name="Morimoto T."/>
            <person name="Ogawa M."/>
            <person name="Fukuhara M."/>
            <person name="Urakami H."/>
            <person name="Ohnishi M."/>
            <person name="Uchiyama I."/>
            <person name="Ogura Y."/>
            <person name="Ooka T."/>
            <person name="Oshima K."/>
            <person name="Tamura A."/>
            <person name="Hattori M."/>
            <person name="Hayashi T."/>
        </authorList>
    </citation>
    <scope>NUCLEOTIDE SEQUENCE [LARGE SCALE GENOMIC DNA]</scope>
    <source>
        <strain>Ikeda</strain>
    </source>
</reference>
<comment type="function">
    <text evidence="1">Endonuclease that specifically degrades the RNA of RNA-DNA hybrids.</text>
</comment>
<comment type="catalytic activity">
    <reaction evidence="1">
        <text>Endonucleolytic cleavage to 5'-phosphomonoester.</text>
        <dbReference type="EC" id="3.1.26.4"/>
    </reaction>
</comment>
<comment type="cofactor">
    <cofactor evidence="1">
        <name>Mn(2+)</name>
        <dbReference type="ChEBI" id="CHEBI:29035"/>
    </cofactor>
    <cofactor evidence="1">
        <name>Mg(2+)</name>
        <dbReference type="ChEBI" id="CHEBI:18420"/>
    </cofactor>
    <text evidence="1">Manganese or magnesium. Binds 1 divalent metal ion per monomer in the absence of substrate. May bind a second metal ion after substrate binding.</text>
</comment>
<comment type="subcellular location">
    <subcellularLocation>
        <location evidence="1">Cytoplasm</location>
    </subcellularLocation>
</comment>
<comment type="similarity">
    <text evidence="1">Belongs to the RNase HII family.</text>
</comment>
<evidence type="ECO:0000255" key="1">
    <source>
        <dbReference type="HAMAP-Rule" id="MF_00052"/>
    </source>
</evidence>
<evidence type="ECO:0000255" key="2">
    <source>
        <dbReference type="PROSITE-ProRule" id="PRU01319"/>
    </source>
</evidence>
<keyword id="KW-0963">Cytoplasm</keyword>
<keyword id="KW-0255">Endonuclease</keyword>
<keyword id="KW-0378">Hydrolase</keyword>
<keyword id="KW-0464">Manganese</keyword>
<keyword id="KW-0479">Metal-binding</keyword>
<keyword id="KW-0540">Nuclease</keyword>
<sequence>MNPNLNIEQDNASEIIAGVDEAGRGPLAGPVVAAAVVVNQSIMIDDIKDSKVLSKSKRESCYDKITNNYYYSIGIASVQEIDKYNILEATKLACIRAVKNLAIIPTKVLVDGNMNFTDNRFISIVRGDQICYSIASASIVAKVTRDRMMQILHQEYPVYGWNQNCGYGTKLHIEAIKTYGQTIHHRVSFKFKGNINHSAILGNMV</sequence>